<sequence>MAASAKVTVGSHVWVEDPDDAWIDGEVEEVNSEEITVNCSGKTVVAKLNNVYPKDPEFPELGVDDMTKLAYLHEPGVLLNLKCRYNANEIYTYTGNILIAVNPFKRLPHLYGSETMKQYKGTAFGELSPHPFAVADSAYRKMINEGVSQAILVSGESGAGKTESTKMLMQYLAYMGGRAESEGRSVEQQVLESNPVLEAFGNAKTVRNNNSSRFGKFVEIQFDQRGRISGAAIRTYLLERSRVCQVSDPERNYHCFYMLCAAPEQETERYKLGKPSTFRYLNQSNCYALDGLDDSKEYLATRKAMDVVGINSEEQDGIFRVVAAILHLGNIEFAKGEESEASEPKDEKSRFHLKVAAELFMCDGKALEDSLCKRVMVTRDESITKSLDPDSAALGRDALAKIVYSKLFDWLVTKINNSIGQDPNSKHIIGVLDIYGFESFKTNSFEQFCINLTNEKLQQHFNQHVFKMEQEEYTKEEIDWSYIEFIDNQDVLDLIEKKPGGIIALLDEACMFPRSTHDTFAQKLYQTFKNHKRFGKPKLAQTDFTICHYAGDVTYQTELFLDKNKDYVVGEHQALLSSSDCSFVSSLFPPLPEESSKTSKFSSIGSQFKQQLQSLLESLSTTEPHYIRCVKPNNLLKPDIFENINILHQLRCGGVMEAIRISCAGYPTRKPFNEFLTRFRILAPETTKSSYDEVDACKKLLAKVDLKGFQIGKTKVFLRAGQMAEMDAHRAEVLGHSARIIQRNVLTYQSRKKFLLLQAASTEIQALCRGQVARVWFETMRREAASLRIQKQARTYICQNAYKTLCSSACSIQTGMRAKAARIELQLRKKRRATIIIQSQIRRCLCHQRYVRTKKAAITTQCGWRVKVARRELRNLKMAAKETGALQDAKTKLENQVEELTSNLELEKQMRMEIEEAKSQEIEALQSVLTDIKLQLRDTQETKSKEISDLQSVLTDIKLQLRDTQETKSKEISDLQSALQDMQLEIEELSKGLEMTNDLAAENEQLKESVSSLQNKIDESERKYEEISKISEERIKDEVPVIDQSAIIKLETENQKLKALVSSMEEKIDELDRKHDETSPNITEKLKEDVSFDYEIVSNLEAENERLKALVGSLEKKINESGNNSTDEQEEGKYILKEESLTEDASIDNERVKKLADENKDLNDLVSSLEKKIDETEKKYEEASRLCEERLKQALDAETGLIDLKTSMQRLEEKVSDMETAEQIRRQQALVNSASRRMSPQVSFTGAPPLENGHQEPLAPIPSRRFGTESFRRSRIERQPHEFVDVLLKCVSKNIGFSHGKPVAALTIYKCLMRWKIFEAEKTSIFDRIVPVFGSAIENQEDDNHLAYWLTNTSTLLFLLQRSLRQQSSTGSSPTKPPQPTSFFGRMTQGFRSTSSPNLSTDVVQQVDARYPALLFKQQLTAYVETMYGIIRENVKREVSSLLSSCIQSLKESSCDSSVVNSPSKSSEENLPAKSSEENSPKKSSEENSPKESSGDKSPQKLSDDNSPSKEGQAVKSSEENSPASSWQSIIEFLNYILITWKKNYVPLFLVQKMFSQTFQYINVQLFNSLLLEREYCTVNMGIKVKAGLDELESWCSQATEEFVGSSWDELKHTRQAVVLLVTEPKSTITYDDLTINLCSVLSTEQLYRICTLCKDKDDGDHNVSPEVISNLKLLLTNEDENSRSFLLDDDSSIPFDTDEISSCMQEKDFANVKSASELADNPNFLFLKE</sequence>
<proteinExistence type="inferred from homology"/>
<organism>
    <name type="scientific">Arabidopsis thaliana</name>
    <name type="common">Mouse-ear cress</name>
    <dbReference type="NCBI Taxonomy" id="3702"/>
    <lineage>
        <taxon>Eukaryota</taxon>
        <taxon>Viridiplantae</taxon>
        <taxon>Streptophyta</taxon>
        <taxon>Embryophyta</taxon>
        <taxon>Tracheophyta</taxon>
        <taxon>Spermatophyta</taxon>
        <taxon>Magnoliopsida</taxon>
        <taxon>eudicotyledons</taxon>
        <taxon>Gunneridae</taxon>
        <taxon>Pentapetalae</taxon>
        <taxon>rosids</taxon>
        <taxon>malvids</taxon>
        <taxon>Brassicales</taxon>
        <taxon>Brassicaceae</taxon>
        <taxon>Camelineae</taxon>
        <taxon>Arabidopsis</taxon>
    </lineage>
</organism>
<comment type="function">
    <text evidence="1">Myosin heavy chain that is required for the cell cycle-regulated transport of various organelles and proteins for their segregation. Functions by binding with its tail domain to receptor proteins on organelles and exerting force with its N-terminal motor domain against actin filaments, thereby transporting its cargo along polarized actin cables (By similarity).</text>
</comment>
<comment type="subunit">
    <text evidence="1">Homodimer.</text>
</comment>
<comment type="domain">
    <text evidence="1">IQ domain mediates interaction with calmodulin.</text>
</comment>
<comment type="domain">
    <text evidence="1">The tail domain is a globular cargo-binding domain.</text>
</comment>
<comment type="similarity">
    <text evidence="8">Belongs to the TRAFAC class myosin-kinesin ATPase superfamily. Myosin family. Plant myosin class XI subfamily.</text>
</comment>
<comment type="sequence caution" evidence="8">
    <conflict type="erroneous gene model prediction">
        <sequence resource="EMBL-CDS" id="AAB80627"/>
    </conflict>
</comment>
<evidence type="ECO:0000250" key="1"/>
<evidence type="ECO:0000255" key="2"/>
<evidence type="ECO:0000255" key="3">
    <source>
        <dbReference type="PROSITE-ProRule" id="PRU00116"/>
    </source>
</evidence>
<evidence type="ECO:0000255" key="4">
    <source>
        <dbReference type="PROSITE-ProRule" id="PRU00503"/>
    </source>
</evidence>
<evidence type="ECO:0000255" key="5">
    <source>
        <dbReference type="PROSITE-ProRule" id="PRU00782"/>
    </source>
</evidence>
<evidence type="ECO:0000255" key="6">
    <source>
        <dbReference type="PROSITE-ProRule" id="PRU01190"/>
    </source>
</evidence>
<evidence type="ECO:0000256" key="7">
    <source>
        <dbReference type="SAM" id="MobiDB-lite"/>
    </source>
</evidence>
<evidence type="ECO:0000305" key="8"/>
<feature type="chain" id="PRO_0000422862" description="Myosin-7">
    <location>
        <begin position="1"/>
        <end position="1730"/>
    </location>
</feature>
<feature type="domain" description="Myosin N-terminal SH3-like" evidence="6">
    <location>
        <begin position="8"/>
        <end position="56"/>
    </location>
</feature>
<feature type="domain" description="Myosin motor" evidence="5">
    <location>
        <begin position="61"/>
        <end position="731"/>
    </location>
</feature>
<feature type="domain" description="IQ 1" evidence="3">
    <location>
        <begin position="757"/>
        <end position="786"/>
    </location>
</feature>
<feature type="domain" description="IQ 2" evidence="3">
    <location>
        <begin position="782"/>
        <end position="811"/>
    </location>
</feature>
<feature type="domain" description="IQ 3" evidence="3">
    <location>
        <begin position="831"/>
        <end position="850"/>
    </location>
</feature>
<feature type="domain" description="IQ 4" evidence="3">
    <location>
        <begin position="853"/>
        <end position="882"/>
    </location>
</feature>
<feature type="domain" description="Dilute" evidence="4">
    <location>
        <begin position="1327"/>
        <end position="1678"/>
    </location>
</feature>
<feature type="region of interest" description="Actin-binding" evidence="2">
    <location>
        <begin position="494"/>
        <end position="528"/>
    </location>
</feature>
<feature type="region of interest" description="Actin-binding" evidence="2">
    <location>
        <begin position="530"/>
        <end position="553"/>
    </location>
</feature>
<feature type="region of interest" description="Actin-binding" evidence="2">
    <location>
        <begin position="588"/>
        <end position="612"/>
    </location>
</feature>
<feature type="region of interest" description="Actin-binding" evidence="1">
    <location>
        <begin position="612"/>
        <end position="634"/>
    </location>
</feature>
<feature type="region of interest" description="Disordered" evidence="7">
    <location>
        <begin position="1367"/>
        <end position="1387"/>
    </location>
</feature>
<feature type="region of interest" description="Disordered" evidence="7">
    <location>
        <begin position="1456"/>
        <end position="1520"/>
    </location>
</feature>
<feature type="coiled-coil region" evidence="2">
    <location>
        <begin position="883"/>
        <end position="1224"/>
    </location>
</feature>
<feature type="compositionally biased region" description="Low complexity" evidence="7">
    <location>
        <begin position="1456"/>
        <end position="1465"/>
    </location>
</feature>
<feature type="compositionally biased region" description="Basic and acidic residues" evidence="7">
    <location>
        <begin position="1475"/>
        <end position="1508"/>
    </location>
</feature>
<feature type="binding site" evidence="2">
    <location>
        <begin position="155"/>
        <end position="162"/>
    </location>
    <ligand>
        <name>ATP</name>
        <dbReference type="ChEBI" id="CHEBI:30616"/>
    </ligand>
</feature>
<feature type="binding site" evidence="2">
    <location>
        <begin position="208"/>
        <end position="216"/>
    </location>
    <ligand>
        <name>ATP</name>
        <dbReference type="ChEBI" id="CHEBI:30616"/>
    </ligand>
</feature>
<gene>
    <name type="primary">XI-A</name>
    <name type="synonym">XIA</name>
    <name type="ordered locus">At1g04600</name>
    <name type="ORF">T1G11.15</name>
</gene>
<accession>F4I5Q6</accession>
<accession>O23025</accession>
<keyword id="KW-0009">Actin-binding</keyword>
<keyword id="KW-0067">ATP-binding</keyword>
<keyword id="KW-0112">Calmodulin-binding</keyword>
<keyword id="KW-0175">Coiled coil</keyword>
<keyword id="KW-0505">Motor protein</keyword>
<keyword id="KW-0518">Myosin</keyword>
<keyword id="KW-0547">Nucleotide-binding</keyword>
<keyword id="KW-1185">Reference proteome</keyword>
<keyword id="KW-0677">Repeat</keyword>
<name>MYO7_ARATH</name>
<reference key="1">
    <citation type="journal article" date="2000" name="Nature">
        <title>Sequence and analysis of chromosome 1 of the plant Arabidopsis thaliana.</title>
        <authorList>
            <person name="Theologis A."/>
            <person name="Ecker J.R."/>
            <person name="Palm C.J."/>
            <person name="Federspiel N.A."/>
            <person name="Kaul S."/>
            <person name="White O."/>
            <person name="Alonso J."/>
            <person name="Altafi H."/>
            <person name="Araujo R."/>
            <person name="Bowman C.L."/>
            <person name="Brooks S.Y."/>
            <person name="Buehler E."/>
            <person name="Chan A."/>
            <person name="Chao Q."/>
            <person name="Chen H."/>
            <person name="Cheuk R.F."/>
            <person name="Chin C.W."/>
            <person name="Chung M.K."/>
            <person name="Conn L."/>
            <person name="Conway A.B."/>
            <person name="Conway A.R."/>
            <person name="Creasy T.H."/>
            <person name="Dewar K."/>
            <person name="Dunn P."/>
            <person name="Etgu P."/>
            <person name="Feldblyum T.V."/>
            <person name="Feng J.-D."/>
            <person name="Fong B."/>
            <person name="Fujii C.Y."/>
            <person name="Gill J.E."/>
            <person name="Goldsmith A.D."/>
            <person name="Haas B."/>
            <person name="Hansen N.F."/>
            <person name="Hughes B."/>
            <person name="Huizar L."/>
            <person name="Hunter J.L."/>
            <person name="Jenkins J."/>
            <person name="Johnson-Hopson C."/>
            <person name="Khan S."/>
            <person name="Khaykin E."/>
            <person name="Kim C.J."/>
            <person name="Koo H.L."/>
            <person name="Kremenetskaia I."/>
            <person name="Kurtz D.B."/>
            <person name="Kwan A."/>
            <person name="Lam B."/>
            <person name="Langin-Hooper S."/>
            <person name="Lee A."/>
            <person name="Lee J.M."/>
            <person name="Lenz C.A."/>
            <person name="Li J.H."/>
            <person name="Li Y.-P."/>
            <person name="Lin X."/>
            <person name="Liu S.X."/>
            <person name="Liu Z.A."/>
            <person name="Luros J.S."/>
            <person name="Maiti R."/>
            <person name="Marziali A."/>
            <person name="Militscher J."/>
            <person name="Miranda M."/>
            <person name="Nguyen M."/>
            <person name="Nierman W.C."/>
            <person name="Osborne B.I."/>
            <person name="Pai G."/>
            <person name="Peterson J."/>
            <person name="Pham P.K."/>
            <person name="Rizzo M."/>
            <person name="Rooney T."/>
            <person name="Rowley D."/>
            <person name="Sakano H."/>
            <person name="Salzberg S.L."/>
            <person name="Schwartz J.R."/>
            <person name="Shinn P."/>
            <person name="Southwick A.M."/>
            <person name="Sun H."/>
            <person name="Tallon L.J."/>
            <person name="Tambunga G."/>
            <person name="Toriumi M.J."/>
            <person name="Town C.D."/>
            <person name="Utterback T."/>
            <person name="Van Aken S."/>
            <person name="Vaysberg M."/>
            <person name="Vysotskaia V.S."/>
            <person name="Walker M."/>
            <person name="Wu D."/>
            <person name="Yu G."/>
            <person name="Fraser C.M."/>
            <person name="Venter J.C."/>
            <person name="Davis R.W."/>
        </authorList>
    </citation>
    <scope>NUCLEOTIDE SEQUENCE [LARGE SCALE GENOMIC DNA]</scope>
    <source>
        <strain>cv. Columbia</strain>
    </source>
</reference>
<reference key="2">
    <citation type="journal article" date="2017" name="Plant J.">
        <title>Araport11: a complete reannotation of the Arabidopsis thaliana reference genome.</title>
        <authorList>
            <person name="Cheng C.Y."/>
            <person name="Krishnakumar V."/>
            <person name="Chan A.P."/>
            <person name="Thibaud-Nissen F."/>
            <person name="Schobel S."/>
            <person name="Town C.D."/>
        </authorList>
    </citation>
    <scope>GENOME REANNOTATION</scope>
    <source>
        <strain>cv. Columbia</strain>
    </source>
</reference>
<reference key="3">
    <citation type="journal article" date="2000" name="J. Cell Sci.">
        <title>A myosin family tree.</title>
        <authorList>
            <person name="Hodge T."/>
            <person name="Cope M.J."/>
        </authorList>
    </citation>
    <scope>GENE FAMILY</scope>
</reference>
<reference key="4">
    <citation type="journal article" date="2001" name="Genome Biol.">
        <title>Analysis of the myosins encoded in the recently completed Arabidopsis thaliana genome sequence.</title>
        <authorList>
            <person name="Reddy A.S."/>
            <person name="Day I.S."/>
        </authorList>
    </citation>
    <scope>GENE FAMILY</scope>
</reference>
<reference key="5">
    <citation type="journal article" date="2011" name="Plant Physiol.">
        <title>Expression, splicing, and evolution of the myosin gene family in plants.</title>
        <authorList>
            <person name="Peremyslov V.V."/>
            <person name="Mockler T.C."/>
            <person name="Filichkin S.A."/>
            <person name="Fox S.E."/>
            <person name="Jaiswal P."/>
            <person name="Makarova K.S."/>
            <person name="Koonin E.V."/>
            <person name="Dolja V.V."/>
        </authorList>
    </citation>
    <scope>GENE FAMILY</scope>
    <scope>NOMENCLATURE</scope>
</reference>
<protein>
    <recommendedName>
        <fullName>Myosin-7</fullName>
    </recommendedName>
    <alternativeName>
        <fullName>Myosin XI A</fullName>
        <shortName>AtXIA</shortName>
    </alternativeName>
</protein>
<dbReference type="EMBL" id="AC002376">
    <property type="protein sequence ID" value="AAB80627.1"/>
    <property type="status" value="ALT_SEQ"/>
    <property type="molecule type" value="Genomic_DNA"/>
</dbReference>
<dbReference type="EMBL" id="CP002684">
    <property type="protein sequence ID" value="AEE27720.1"/>
    <property type="molecule type" value="Genomic_DNA"/>
</dbReference>
<dbReference type="PIR" id="F86178">
    <property type="entry name" value="F86178"/>
</dbReference>
<dbReference type="RefSeq" id="NP_171954.1">
    <property type="nucleotide sequence ID" value="NM_100339.2"/>
</dbReference>
<dbReference type="SMR" id="F4I5Q6"/>
<dbReference type="BioGRID" id="24715">
    <property type="interactions" value="1"/>
</dbReference>
<dbReference type="FunCoup" id="F4I5Q6">
    <property type="interactions" value="820"/>
</dbReference>
<dbReference type="STRING" id="3702.F4I5Q6"/>
<dbReference type="iPTMnet" id="F4I5Q6"/>
<dbReference type="PaxDb" id="3702-AT1G04600.1"/>
<dbReference type="ProteomicsDB" id="251276"/>
<dbReference type="EnsemblPlants" id="AT1G04600.1">
    <property type="protein sequence ID" value="AT1G04600.1"/>
    <property type="gene ID" value="AT1G04600"/>
</dbReference>
<dbReference type="GeneID" id="839480"/>
<dbReference type="Gramene" id="AT1G04600.1">
    <property type="protein sequence ID" value="AT1G04600.1"/>
    <property type="gene ID" value="AT1G04600"/>
</dbReference>
<dbReference type="KEGG" id="ath:AT1G04600"/>
<dbReference type="Araport" id="AT1G04600"/>
<dbReference type="TAIR" id="AT1G04600">
    <property type="gene designation" value="XIA"/>
</dbReference>
<dbReference type="eggNOG" id="KOG0160">
    <property type="taxonomic scope" value="Eukaryota"/>
</dbReference>
<dbReference type="HOGENOM" id="CLU_000192_3_1_1"/>
<dbReference type="InParanoid" id="F4I5Q6"/>
<dbReference type="OMA" id="ELFMCDG"/>
<dbReference type="PRO" id="PR:F4I5Q6"/>
<dbReference type="Proteomes" id="UP000006548">
    <property type="component" value="Chromosome 1"/>
</dbReference>
<dbReference type="ExpressionAtlas" id="F4I5Q6">
    <property type="expression patterns" value="baseline and differential"/>
</dbReference>
<dbReference type="GO" id="GO:0016459">
    <property type="term" value="C:myosin complex"/>
    <property type="evidence" value="ECO:0007669"/>
    <property type="project" value="UniProtKB-KW"/>
</dbReference>
<dbReference type="GO" id="GO:0003779">
    <property type="term" value="F:actin binding"/>
    <property type="evidence" value="ECO:0007669"/>
    <property type="project" value="UniProtKB-KW"/>
</dbReference>
<dbReference type="GO" id="GO:0005524">
    <property type="term" value="F:ATP binding"/>
    <property type="evidence" value="ECO:0007669"/>
    <property type="project" value="UniProtKB-KW"/>
</dbReference>
<dbReference type="GO" id="GO:0005516">
    <property type="term" value="F:calmodulin binding"/>
    <property type="evidence" value="ECO:0007669"/>
    <property type="project" value="UniProtKB-KW"/>
</dbReference>
<dbReference type="GO" id="GO:0003774">
    <property type="term" value="F:cytoskeletal motor activity"/>
    <property type="evidence" value="ECO:0000250"/>
    <property type="project" value="TAIR"/>
</dbReference>
<dbReference type="GO" id="GO:0007015">
    <property type="term" value="P:actin filament organization"/>
    <property type="evidence" value="ECO:0007669"/>
    <property type="project" value="InterPro"/>
</dbReference>
<dbReference type="GO" id="GO:0030048">
    <property type="term" value="P:actin filament-based movement"/>
    <property type="evidence" value="ECO:0000304"/>
    <property type="project" value="TAIR"/>
</dbReference>
<dbReference type="CDD" id="cd15475">
    <property type="entry name" value="MyosinXI_CBD"/>
    <property type="match status" value="1"/>
</dbReference>
<dbReference type="CDD" id="cd01384">
    <property type="entry name" value="MYSc_Myo11"/>
    <property type="match status" value="1"/>
</dbReference>
<dbReference type="FunFam" id="1.20.58.530:FF:000002">
    <property type="entry name" value="Class V myosin"/>
    <property type="match status" value="1"/>
</dbReference>
<dbReference type="FunFam" id="1.20.120.720:FF:000011">
    <property type="entry name" value="Myosin 2"/>
    <property type="match status" value="1"/>
</dbReference>
<dbReference type="FunFam" id="1.10.10.820:FF:000001">
    <property type="entry name" value="Myosin heavy chain"/>
    <property type="match status" value="1"/>
</dbReference>
<dbReference type="FunFam" id="1.20.5.190:FF:000018">
    <property type="entry name" value="Myosin XI D"/>
    <property type="match status" value="1"/>
</dbReference>
<dbReference type="FunFam" id="1.20.5.190:FF:000001">
    <property type="entry name" value="unconventional myosin-Va"/>
    <property type="match status" value="1"/>
</dbReference>
<dbReference type="Gene3D" id="1.10.10.820">
    <property type="match status" value="1"/>
</dbReference>
<dbReference type="Gene3D" id="1.20.5.190">
    <property type="match status" value="2"/>
</dbReference>
<dbReference type="Gene3D" id="1.20.58.530">
    <property type="match status" value="1"/>
</dbReference>
<dbReference type="Gene3D" id="6.20.240.20">
    <property type="match status" value="1"/>
</dbReference>
<dbReference type="Gene3D" id="3.40.850.10">
    <property type="entry name" value="Kinesin motor domain"/>
    <property type="match status" value="1"/>
</dbReference>
<dbReference type="Gene3D" id="1.20.120.720">
    <property type="entry name" value="Myosin VI head, motor domain, U50 subdomain"/>
    <property type="match status" value="1"/>
</dbReference>
<dbReference type="InterPro" id="IPR002710">
    <property type="entry name" value="Dilute_dom"/>
</dbReference>
<dbReference type="InterPro" id="IPR000048">
    <property type="entry name" value="IQ_motif_EF-hand-BS"/>
</dbReference>
<dbReference type="InterPro" id="IPR036961">
    <property type="entry name" value="Kinesin_motor_dom_sf"/>
</dbReference>
<dbReference type="InterPro" id="IPR001609">
    <property type="entry name" value="Myosin_head_motor_dom-like"/>
</dbReference>
<dbReference type="InterPro" id="IPR004009">
    <property type="entry name" value="Myosin_N"/>
</dbReference>
<dbReference type="InterPro" id="IPR037975">
    <property type="entry name" value="MyosinXI_CBD"/>
</dbReference>
<dbReference type="InterPro" id="IPR036018">
    <property type="entry name" value="MYSc_Myo11"/>
</dbReference>
<dbReference type="InterPro" id="IPR027417">
    <property type="entry name" value="P-loop_NTPase"/>
</dbReference>
<dbReference type="PANTHER" id="PTHR13140">
    <property type="entry name" value="MYOSIN"/>
    <property type="match status" value="1"/>
</dbReference>
<dbReference type="PANTHER" id="PTHR13140:SF761">
    <property type="entry name" value="MYOSIN-7"/>
    <property type="match status" value="1"/>
</dbReference>
<dbReference type="Pfam" id="PF01843">
    <property type="entry name" value="DIL"/>
    <property type="match status" value="1"/>
</dbReference>
<dbReference type="Pfam" id="PF00612">
    <property type="entry name" value="IQ"/>
    <property type="match status" value="2"/>
</dbReference>
<dbReference type="Pfam" id="PF00063">
    <property type="entry name" value="Myosin_head"/>
    <property type="match status" value="1"/>
</dbReference>
<dbReference type="Pfam" id="PF02736">
    <property type="entry name" value="Myosin_N"/>
    <property type="match status" value="1"/>
</dbReference>
<dbReference type="PRINTS" id="PR00193">
    <property type="entry name" value="MYOSINHEAVY"/>
</dbReference>
<dbReference type="SMART" id="SM01132">
    <property type="entry name" value="DIL"/>
    <property type="match status" value="1"/>
</dbReference>
<dbReference type="SMART" id="SM00015">
    <property type="entry name" value="IQ"/>
    <property type="match status" value="5"/>
</dbReference>
<dbReference type="SMART" id="SM00242">
    <property type="entry name" value="MYSc"/>
    <property type="match status" value="1"/>
</dbReference>
<dbReference type="SUPFAM" id="SSF52540">
    <property type="entry name" value="P-loop containing nucleoside triphosphate hydrolases"/>
    <property type="match status" value="2"/>
</dbReference>
<dbReference type="PROSITE" id="PS51126">
    <property type="entry name" value="DILUTE"/>
    <property type="match status" value="1"/>
</dbReference>
<dbReference type="PROSITE" id="PS50096">
    <property type="entry name" value="IQ"/>
    <property type="match status" value="2"/>
</dbReference>
<dbReference type="PROSITE" id="PS51456">
    <property type="entry name" value="MYOSIN_MOTOR"/>
    <property type="match status" value="1"/>
</dbReference>
<dbReference type="PROSITE" id="PS51844">
    <property type="entry name" value="SH3_LIKE"/>
    <property type="match status" value="1"/>
</dbReference>